<comment type="function">
    <text evidence="1">Binds 23S rRNA and is also seen to make contacts with the A and possibly P site tRNAs.</text>
</comment>
<comment type="subunit">
    <text evidence="1">Part of the 50S ribosomal subunit.</text>
</comment>
<comment type="similarity">
    <text evidence="1">Belongs to the universal ribosomal protein uL16 family.</text>
</comment>
<dbReference type="EMBL" id="AM233362">
    <property type="protein sequence ID" value="CAJ78684.1"/>
    <property type="molecule type" value="Genomic_DNA"/>
</dbReference>
<dbReference type="RefSeq" id="WP_010030778.1">
    <property type="nucleotide sequence ID" value="NZ_CP009694.1"/>
</dbReference>
<dbReference type="SMR" id="Q2A5G3"/>
<dbReference type="KEGG" id="ftl:FTL_0243"/>
<dbReference type="Proteomes" id="UP000001944">
    <property type="component" value="Chromosome"/>
</dbReference>
<dbReference type="GO" id="GO:0022625">
    <property type="term" value="C:cytosolic large ribosomal subunit"/>
    <property type="evidence" value="ECO:0007669"/>
    <property type="project" value="TreeGrafter"/>
</dbReference>
<dbReference type="GO" id="GO:0019843">
    <property type="term" value="F:rRNA binding"/>
    <property type="evidence" value="ECO:0007669"/>
    <property type="project" value="UniProtKB-UniRule"/>
</dbReference>
<dbReference type="GO" id="GO:0003735">
    <property type="term" value="F:structural constituent of ribosome"/>
    <property type="evidence" value="ECO:0007669"/>
    <property type="project" value="InterPro"/>
</dbReference>
<dbReference type="GO" id="GO:0000049">
    <property type="term" value="F:tRNA binding"/>
    <property type="evidence" value="ECO:0007669"/>
    <property type="project" value="UniProtKB-KW"/>
</dbReference>
<dbReference type="GO" id="GO:0006412">
    <property type="term" value="P:translation"/>
    <property type="evidence" value="ECO:0007669"/>
    <property type="project" value="UniProtKB-UniRule"/>
</dbReference>
<dbReference type="CDD" id="cd01433">
    <property type="entry name" value="Ribosomal_L16_L10e"/>
    <property type="match status" value="1"/>
</dbReference>
<dbReference type="FunFam" id="3.90.1170.10:FF:000001">
    <property type="entry name" value="50S ribosomal protein L16"/>
    <property type="match status" value="1"/>
</dbReference>
<dbReference type="Gene3D" id="3.90.1170.10">
    <property type="entry name" value="Ribosomal protein L10e/L16"/>
    <property type="match status" value="1"/>
</dbReference>
<dbReference type="HAMAP" id="MF_01342">
    <property type="entry name" value="Ribosomal_uL16"/>
    <property type="match status" value="1"/>
</dbReference>
<dbReference type="InterPro" id="IPR047873">
    <property type="entry name" value="Ribosomal_uL16"/>
</dbReference>
<dbReference type="InterPro" id="IPR000114">
    <property type="entry name" value="Ribosomal_uL16_bact-type"/>
</dbReference>
<dbReference type="InterPro" id="IPR020798">
    <property type="entry name" value="Ribosomal_uL16_CS"/>
</dbReference>
<dbReference type="InterPro" id="IPR016180">
    <property type="entry name" value="Ribosomal_uL16_dom"/>
</dbReference>
<dbReference type="InterPro" id="IPR036920">
    <property type="entry name" value="Ribosomal_uL16_sf"/>
</dbReference>
<dbReference type="NCBIfam" id="TIGR01164">
    <property type="entry name" value="rplP_bact"/>
    <property type="match status" value="1"/>
</dbReference>
<dbReference type="PANTHER" id="PTHR12220">
    <property type="entry name" value="50S/60S RIBOSOMAL PROTEIN L16"/>
    <property type="match status" value="1"/>
</dbReference>
<dbReference type="PANTHER" id="PTHR12220:SF13">
    <property type="entry name" value="LARGE RIBOSOMAL SUBUNIT PROTEIN UL16M"/>
    <property type="match status" value="1"/>
</dbReference>
<dbReference type="Pfam" id="PF00252">
    <property type="entry name" value="Ribosomal_L16"/>
    <property type="match status" value="1"/>
</dbReference>
<dbReference type="PRINTS" id="PR00060">
    <property type="entry name" value="RIBOSOMALL16"/>
</dbReference>
<dbReference type="SUPFAM" id="SSF54686">
    <property type="entry name" value="Ribosomal protein L16p/L10e"/>
    <property type="match status" value="1"/>
</dbReference>
<dbReference type="PROSITE" id="PS00586">
    <property type="entry name" value="RIBOSOMAL_L16_1"/>
    <property type="match status" value="1"/>
</dbReference>
<dbReference type="PROSITE" id="PS00701">
    <property type="entry name" value="RIBOSOMAL_L16_2"/>
    <property type="match status" value="1"/>
</dbReference>
<protein>
    <recommendedName>
        <fullName evidence="1">Large ribosomal subunit protein uL16</fullName>
    </recommendedName>
    <alternativeName>
        <fullName evidence="2">50S ribosomal protein L16</fullName>
    </alternativeName>
</protein>
<sequence>MLQPKRTKFRKQQKLRNRGLAYRGNKVSFGEFGLQATSRGRITARQIEAGRRAISRHIKRGGKIWIRIFPDKPITQKPLEVRMGKGKGSVEYWVAQIQPGRVLYEITGVKEELAREAFARAAAKMPVQTTFVEKQVM</sequence>
<gene>
    <name evidence="1" type="primary">rplP</name>
    <name type="ordered locus">FTL_0243</name>
</gene>
<evidence type="ECO:0000255" key="1">
    <source>
        <dbReference type="HAMAP-Rule" id="MF_01342"/>
    </source>
</evidence>
<evidence type="ECO:0000305" key="2"/>
<feature type="chain" id="PRO_0000251635" description="Large ribosomal subunit protein uL16">
    <location>
        <begin position="1"/>
        <end position="137"/>
    </location>
</feature>
<reference key="1">
    <citation type="submission" date="2006-03" db="EMBL/GenBank/DDBJ databases">
        <title>Complete genome sequence of Francisella tularensis LVS (Live Vaccine Strain).</title>
        <authorList>
            <person name="Chain P."/>
            <person name="Larimer F."/>
            <person name="Land M."/>
            <person name="Stilwagen S."/>
            <person name="Larsson P."/>
            <person name="Bearden S."/>
            <person name="Chu M."/>
            <person name="Oyston P."/>
            <person name="Forsman M."/>
            <person name="Andersson S."/>
            <person name="Lindler L."/>
            <person name="Titball R."/>
            <person name="Garcia E."/>
        </authorList>
    </citation>
    <scope>NUCLEOTIDE SEQUENCE [LARGE SCALE GENOMIC DNA]</scope>
    <source>
        <strain>LVS</strain>
    </source>
</reference>
<keyword id="KW-1185">Reference proteome</keyword>
<keyword id="KW-0687">Ribonucleoprotein</keyword>
<keyword id="KW-0689">Ribosomal protein</keyword>
<keyword id="KW-0694">RNA-binding</keyword>
<keyword id="KW-0699">rRNA-binding</keyword>
<keyword id="KW-0820">tRNA-binding</keyword>
<proteinExistence type="inferred from homology"/>
<accession>Q2A5G3</accession>
<organism>
    <name type="scientific">Francisella tularensis subsp. holarctica (strain LVS)</name>
    <dbReference type="NCBI Taxonomy" id="376619"/>
    <lineage>
        <taxon>Bacteria</taxon>
        <taxon>Pseudomonadati</taxon>
        <taxon>Pseudomonadota</taxon>
        <taxon>Gammaproteobacteria</taxon>
        <taxon>Thiotrichales</taxon>
        <taxon>Francisellaceae</taxon>
        <taxon>Francisella</taxon>
    </lineage>
</organism>
<name>RL16_FRATH</name>